<dbReference type="EMBL" id="CP000448">
    <property type="protein sequence ID" value="ABI67804.1"/>
    <property type="molecule type" value="Genomic_DNA"/>
</dbReference>
<dbReference type="RefSeq" id="WP_011639912.1">
    <property type="nucleotide sequence ID" value="NC_008346.1"/>
</dbReference>
<dbReference type="SMR" id="Q0AZQ0"/>
<dbReference type="STRING" id="335541.Swol_0469"/>
<dbReference type="KEGG" id="swo:Swol_0469"/>
<dbReference type="eggNOG" id="COG4472">
    <property type="taxonomic scope" value="Bacteria"/>
</dbReference>
<dbReference type="HOGENOM" id="CLU_162466_0_0_9"/>
<dbReference type="OrthoDB" id="9796303at2"/>
<dbReference type="Proteomes" id="UP000001968">
    <property type="component" value="Chromosome"/>
</dbReference>
<dbReference type="HAMAP" id="MF_01507">
    <property type="entry name" value="UPF0297"/>
    <property type="match status" value="1"/>
</dbReference>
<dbReference type="InterPro" id="IPR009309">
    <property type="entry name" value="IreB"/>
</dbReference>
<dbReference type="NCBIfam" id="NF003997">
    <property type="entry name" value="PRK05473.1"/>
    <property type="match status" value="1"/>
</dbReference>
<dbReference type="PANTHER" id="PTHR40067">
    <property type="entry name" value="UPF0297 PROTEIN YRZL"/>
    <property type="match status" value="1"/>
</dbReference>
<dbReference type="PANTHER" id="PTHR40067:SF1">
    <property type="entry name" value="UPF0297 PROTEIN YRZL"/>
    <property type="match status" value="1"/>
</dbReference>
<dbReference type="Pfam" id="PF06135">
    <property type="entry name" value="IreB"/>
    <property type="match status" value="1"/>
</dbReference>
<dbReference type="PIRSF" id="PIRSF037258">
    <property type="entry name" value="DUF965_bac"/>
    <property type="match status" value="1"/>
</dbReference>
<name>Y469_SYNWW</name>
<reference key="1">
    <citation type="journal article" date="2010" name="Environ. Microbiol.">
        <title>The genome of Syntrophomonas wolfei: new insights into syntrophic metabolism and biohydrogen production.</title>
        <authorList>
            <person name="Sieber J.R."/>
            <person name="Sims D.R."/>
            <person name="Han C."/>
            <person name="Kim E."/>
            <person name="Lykidis A."/>
            <person name="Lapidus A.L."/>
            <person name="McDonnald E."/>
            <person name="Rohlin L."/>
            <person name="Culley D.E."/>
            <person name="Gunsalus R."/>
            <person name="McInerney M.J."/>
        </authorList>
    </citation>
    <scope>NUCLEOTIDE SEQUENCE [LARGE SCALE GENOMIC DNA]</scope>
    <source>
        <strain>DSM 2245B / Goettingen</strain>
    </source>
</reference>
<evidence type="ECO:0000255" key="1">
    <source>
        <dbReference type="HAMAP-Rule" id="MF_01507"/>
    </source>
</evidence>
<protein>
    <recommendedName>
        <fullName evidence="1">UPF0297 protein Swol_0469</fullName>
    </recommendedName>
</protein>
<proteinExistence type="inferred from homology"/>
<keyword id="KW-1185">Reference proteome</keyword>
<comment type="similarity">
    <text evidence="1">Belongs to the UPF0297 family.</text>
</comment>
<gene>
    <name type="ordered locus">Swol_0469</name>
</gene>
<organism>
    <name type="scientific">Syntrophomonas wolfei subsp. wolfei (strain DSM 2245B / Goettingen)</name>
    <dbReference type="NCBI Taxonomy" id="335541"/>
    <lineage>
        <taxon>Bacteria</taxon>
        <taxon>Bacillati</taxon>
        <taxon>Bacillota</taxon>
        <taxon>Clostridia</taxon>
        <taxon>Eubacteriales</taxon>
        <taxon>Syntrophomonadaceae</taxon>
        <taxon>Syntrophomonas</taxon>
    </lineage>
</organism>
<accession>Q0AZQ0</accession>
<feature type="chain" id="PRO_0000289315" description="UPF0297 protein Swol_0469">
    <location>
        <begin position="1"/>
        <end position="90"/>
    </location>
</feature>
<sequence>MPQLPGETVSFKLERDDENKVRAILHTVYQALQEKGYNPINQLVGYMISGEPAYITSHSEARNLICKVDRDEIMEVLLKSYLQNSMGKGE</sequence>